<comment type="subcellular location">
    <subcellularLocation>
        <location>Cell membrane</location>
        <topology>Multi-pass membrane protein</topology>
    </subcellularLocation>
</comment>
<comment type="similarity">
    <text evidence="2">Belongs to the major facilitator superfamily.</text>
</comment>
<accession>O34367</accession>
<accession>Q795V8</accession>
<dbReference type="EMBL" id="AF008220">
    <property type="protein sequence ID" value="AAC00407.1"/>
    <property type="molecule type" value="Genomic_DNA"/>
</dbReference>
<dbReference type="EMBL" id="AL009126">
    <property type="protein sequence ID" value="CAB14864.1"/>
    <property type="molecule type" value="Genomic_DNA"/>
</dbReference>
<dbReference type="PIR" id="C69988">
    <property type="entry name" value="C69988"/>
</dbReference>
<dbReference type="RefSeq" id="NP_390782.1">
    <property type="nucleotide sequence ID" value="NC_000964.3"/>
</dbReference>
<dbReference type="RefSeq" id="WP_003229456.1">
    <property type="nucleotide sequence ID" value="NZ_OZ025638.1"/>
</dbReference>
<dbReference type="SMR" id="O34367"/>
<dbReference type="FunCoup" id="O34367">
    <property type="interactions" value="404"/>
</dbReference>
<dbReference type="STRING" id="224308.BSU29040"/>
<dbReference type="PaxDb" id="224308-BSU29040"/>
<dbReference type="EnsemblBacteria" id="CAB14864">
    <property type="protein sequence ID" value="CAB14864"/>
    <property type="gene ID" value="BSU_29040"/>
</dbReference>
<dbReference type="GeneID" id="936655"/>
<dbReference type="KEGG" id="bsu:BSU29040"/>
<dbReference type="PATRIC" id="fig|224308.179.peg.3153"/>
<dbReference type="eggNOG" id="COG2814">
    <property type="taxonomic scope" value="Bacteria"/>
</dbReference>
<dbReference type="InParanoid" id="O34367"/>
<dbReference type="OrthoDB" id="9788453at2"/>
<dbReference type="PhylomeDB" id="O34367"/>
<dbReference type="BioCyc" id="BSUB:BSU29040-MONOMER"/>
<dbReference type="Proteomes" id="UP000001570">
    <property type="component" value="Chromosome"/>
</dbReference>
<dbReference type="GO" id="GO:0005886">
    <property type="term" value="C:plasma membrane"/>
    <property type="evidence" value="ECO:0000318"/>
    <property type="project" value="GO_Central"/>
</dbReference>
<dbReference type="GO" id="GO:0022857">
    <property type="term" value="F:transmembrane transporter activity"/>
    <property type="evidence" value="ECO:0000318"/>
    <property type="project" value="GO_Central"/>
</dbReference>
<dbReference type="GO" id="GO:0055085">
    <property type="term" value="P:transmembrane transport"/>
    <property type="evidence" value="ECO:0000318"/>
    <property type="project" value="GO_Central"/>
</dbReference>
<dbReference type="CDD" id="cd17324">
    <property type="entry name" value="MFS_NepI_like"/>
    <property type="match status" value="1"/>
</dbReference>
<dbReference type="Gene3D" id="1.20.1250.20">
    <property type="entry name" value="MFS general substrate transporter like domains"/>
    <property type="match status" value="1"/>
</dbReference>
<dbReference type="InterPro" id="IPR011701">
    <property type="entry name" value="MFS"/>
</dbReference>
<dbReference type="InterPro" id="IPR020846">
    <property type="entry name" value="MFS_dom"/>
</dbReference>
<dbReference type="InterPro" id="IPR050189">
    <property type="entry name" value="MFS_Efflux_Transporters"/>
</dbReference>
<dbReference type="InterPro" id="IPR036259">
    <property type="entry name" value="MFS_trans_sf"/>
</dbReference>
<dbReference type="PANTHER" id="PTHR43124:SF8">
    <property type="entry name" value="INNER MEMBRANE TRANSPORT PROTEIN YDHP"/>
    <property type="match status" value="1"/>
</dbReference>
<dbReference type="PANTHER" id="PTHR43124">
    <property type="entry name" value="PURINE EFFLUX PUMP PBUE"/>
    <property type="match status" value="1"/>
</dbReference>
<dbReference type="Pfam" id="PF07690">
    <property type="entry name" value="MFS_1"/>
    <property type="match status" value="1"/>
</dbReference>
<dbReference type="SUPFAM" id="SSF103473">
    <property type="entry name" value="MFS general substrate transporter"/>
    <property type="match status" value="1"/>
</dbReference>
<dbReference type="PROSITE" id="PS50850">
    <property type="entry name" value="MFS"/>
    <property type="match status" value="1"/>
</dbReference>
<protein>
    <recommendedName>
        <fullName>Uncharacterized MFS-type transporter YtbD</fullName>
    </recommendedName>
</protein>
<keyword id="KW-1003">Cell membrane</keyword>
<keyword id="KW-0472">Membrane</keyword>
<keyword id="KW-1185">Reference proteome</keyword>
<keyword id="KW-0812">Transmembrane</keyword>
<keyword id="KW-1133">Transmembrane helix</keyword>
<keyword id="KW-0813">Transport</keyword>
<organism>
    <name type="scientific">Bacillus subtilis (strain 168)</name>
    <dbReference type="NCBI Taxonomy" id="224308"/>
    <lineage>
        <taxon>Bacteria</taxon>
        <taxon>Bacillati</taxon>
        <taxon>Bacillota</taxon>
        <taxon>Bacilli</taxon>
        <taxon>Bacillales</taxon>
        <taxon>Bacillaceae</taxon>
        <taxon>Bacillus</taxon>
    </lineage>
</organism>
<name>YTBD_BACSU</name>
<feature type="chain" id="PRO_0000349885" description="Uncharacterized MFS-type transporter YtbD">
    <location>
        <begin position="1"/>
        <end position="396"/>
    </location>
</feature>
<feature type="transmembrane region" description="Helical" evidence="1">
    <location>
        <begin position="12"/>
        <end position="32"/>
    </location>
</feature>
<feature type="transmembrane region" description="Helical" evidence="1">
    <location>
        <begin position="48"/>
        <end position="68"/>
    </location>
</feature>
<feature type="transmembrane region" description="Helical" evidence="1">
    <location>
        <begin position="78"/>
        <end position="98"/>
    </location>
</feature>
<feature type="transmembrane region" description="Helical" evidence="1">
    <location>
        <begin position="106"/>
        <end position="126"/>
    </location>
</feature>
<feature type="transmembrane region" description="Helical" evidence="1">
    <location>
        <begin position="138"/>
        <end position="158"/>
    </location>
</feature>
<feature type="transmembrane region" description="Helical" evidence="1">
    <location>
        <begin position="165"/>
        <end position="185"/>
    </location>
</feature>
<feature type="transmembrane region" description="Helical" evidence="1">
    <location>
        <begin position="209"/>
        <end position="229"/>
    </location>
</feature>
<feature type="transmembrane region" description="Helical" evidence="1">
    <location>
        <begin position="242"/>
        <end position="262"/>
    </location>
</feature>
<feature type="transmembrane region" description="Helical" evidence="1">
    <location>
        <begin position="271"/>
        <end position="291"/>
    </location>
</feature>
<feature type="transmembrane region" description="Helical" evidence="1">
    <location>
        <begin position="297"/>
        <end position="317"/>
    </location>
</feature>
<feature type="transmembrane region" description="Helical" evidence="1">
    <location>
        <begin position="338"/>
        <end position="358"/>
    </location>
</feature>
<feature type="transmembrane region" description="Helical" evidence="1">
    <location>
        <begin position="362"/>
        <end position="382"/>
    </location>
</feature>
<reference key="1">
    <citation type="journal article" date="1997" name="Microbiology">
        <title>Sequencing and functional annotation of the Bacillus subtilis genes in the 200 kb rrnB-dnaB region.</title>
        <authorList>
            <person name="Lapidus A."/>
            <person name="Galleron N."/>
            <person name="Sorokin A."/>
            <person name="Ehrlich S.D."/>
        </authorList>
    </citation>
    <scope>NUCLEOTIDE SEQUENCE [GENOMIC DNA]</scope>
    <source>
        <strain>168</strain>
    </source>
</reference>
<reference key="2">
    <citation type="journal article" date="1997" name="Nature">
        <title>The complete genome sequence of the Gram-positive bacterium Bacillus subtilis.</title>
        <authorList>
            <person name="Kunst F."/>
            <person name="Ogasawara N."/>
            <person name="Moszer I."/>
            <person name="Albertini A.M."/>
            <person name="Alloni G."/>
            <person name="Azevedo V."/>
            <person name="Bertero M.G."/>
            <person name="Bessieres P."/>
            <person name="Bolotin A."/>
            <person name="Borchert S."/>
            <person name="Borriss R."/>
            <person name="Boursier L."/>
            <person name="Brans A."/>
            <person name="Braun M."/>
            <person name="Brignell S.C."/>
            <person name="Bron S."/>
            <person name="Brouillet S."/>
            <person name="Bruschi C.V."/>
            <person name="Caldwell B."/>
            <person name="Capuano V."/>
            <person name="Carter N.M."/>
            <person name="Choi S.-K."/>
            <person name="Codani J.-J."/>
            <person name="Connerton I.F."/>
            <person name="Cummings N.J."/>
            <person name="Daniel R.A."/>
            <person name="Denizot F."/>
            <person name="Devine K.M."/>
            <person name="Duesterhoeft A."/>
            <person name="Ehrlich S.D."/>
            <person name="Emmerson P.T."/>
            <person name="Entian K.-D."/>
            <person name="Errington J."/>
            <person name="Fabret C."/>
            <person name="Ferrari E."/>
            <person name="Foulger D."/>
            <person name="Fritz C."/>
            <person name="Fujita M."/>
            <person name="Fujita Y."/>
            <person name="Fuma S."/>
            <person name="Galizzi A."/>
            <person name="Galleron N."/>
            <person name="Ghim S.-Y."/>
            <person name="Glaser P."/>
            <person name="Goffeau A."/>
            <person name="Golightly E.J."/>
            <person name="Grandi G."/>
            <person name="Guiseppi G."/>
            <person name="Guy B.J."/>
            <person name="Haga K."/>
            <person name="Haiech J."/>
            <person name="Harwood C.R."/>
            <person name="Henaut A."/>
            <person name="Hilbert H."/>
            <person name="Holsappel S."/>
            <person name="Hosono S."/>
            <person name="Hullo M.-F."/>
            <person name="Itaya M."/>
            <person name="Jones L.-M."/>
            <person name="Joris B."/>
            <person name="Karamata D."/>
            <person name="Kasahara Y."/>
            <person name="Klaerr-Blanchard M."/>
            <person name="Klein C."/>
            <person name="Kobayashi Y."/>
            <person name="Koetter P."/>
            <person name="Koningstein G."/>
            <person name="Krogh S."/>
            <person name="Kumano M."/>
            <person name="Kurita K."/>
            <person name="Lapidus A."/>
            <person name="Lardinois S."/>
            <person name="Lauber J."/>
            <person name="Lazarevic V."/>
            <person name="Lee S.-M."/>
            <person name="Levine A."/>
            <person name="Liu H."/>
            <person name="Masuda S."/>
            <person name="Mauel C."/>
            <person name="Medigue C."/>
            <person name="Medina N."/>
            <person name="Mellado R.P."/>
            <person name="Mizuno M."/>
            <person name="Moestl D."/>
            <person name="Nakai S."/>
            <person name="Noback M."/>
            <person name="Noone D."/>
            <person name="O'Reilly M."/>
            <person name="Ogawa K."/>
            <person name="Ogiwara A."/>
            <person name="Oudega B."/>
            <person name="Park S.-H."/>
            <person name="Parro V."/>
            <person name="Pohl T.M."/>
            <person name="Portetelle D."/>
            <person name="Porwollik S."/>
            <person name="Prescott A.M."/>
            <person name="Presecan E."/>
            <person name="Pujic P."/>
            <person name="Purnelle B."/>
            <person name="Rapoport G."/>
            <person name="Rey M."/>
            <person name="Reynolds S."/>
            <person name="Rieger M."/>
            <person name="Rivolta C."/>
            <person name="Rocha E."/>
            <person name="Roche B."/>
            <person name="Rose M."/>
            <person name="Sadaie Y."/>
            <person name="Sato T."/>
            <person name="Scanlan E."/>
            <person name="Schleich S."/>
            <person name="Schroeter R."/>
            <person name="Scoffone F."/>
            <person name="Sekiguchi J."/>
            <person name="Sekowska A."/>
            <person name="Seror S.J."/>
            <person name="Serror P."/>
            <person name="Shin B.-S."/>
            <person name="Soldo B."/>
            <person name="Sorokin A."/>
            <person name="Tacconi E."/>
            <person name="Takagi T."/>
            <person name="Takahashi H."/>
            <person name="Takemaru K."/>
            <person name="Takeuchi M."/>
            <person name="Tamakoshi A."/>
            <person name="Tanaka T."/>
            <person name="Terpstra P."/>
            <person name="Tognoni A."/>
            <person name="Tosato V."/>
            <person name="Uchiyama S."/>
            <person name="Vandenbol M."/>
            <person name="Vannier F."/>
            <person name="Vassarotti A."/>
            <person name="Viari A."/>
            <person name="Wambutt R."/>
            <person name="Wedler E."/>
            <person name="Wedler H."/>
            <person name="Weitzenegger T."/>
            <person name="Winters P."/>
            <person name="Wipat A."/>
            <person name="Yamamoto H."/>
            <person name="Yamane K."/>
            <person name="Yasumoto K."/>
            <person name="Yata K."/>
            <person name="Yoshida K."/>
            <person name="Yoshikawa H.-F."/>
            <person name="Zumstein E."/>
            <person name="Yoshikawa H."/>
            <person name="Danchin A."/>
        </authorList>
    </citation>
    <scope>NUCLEOTIDE SEQUENCE [LARGE SCALE GENOMIC DNA]</scope>
    <source>
        <strain>168</strain>
    </source>
</reference>
<sequence>MTSANKSNIPALLALAVSAFAIGTTEFISVGLLPLIADDLDIPVTTAGLTVSLYALGVTFGAPILTSLTSSMSRKTLLLWIMFIFIAGNTMAATASSIGILLAARVISAFSHGVFMSIGSTIAADIVPEDKRASAISIMFTGLTVATVTGVPFGTFIGQQFGWRFAFMVIIAVGIIAFITNGILVPSKLRKGTKTTMRDQLKLVTNSRLLLLFVITALGYGGTFVVFTYLSPLLQEVTGFKAGTVAVILLGYGIAIAIGNMIGGKLSNRNPIAALFYMFIVQAIVLFVLTFTAPYQAAGLITILCMGLLAFMNVPGLQVYVVMLAERFVPSAVDVASAMNIAAFNAGIALGSYLGGVITDSIGLIHTAWIGGLMVVGAVILTGWSRLMEKRDRQEA</sequence>
<gene>
    <name type="primary">ytbD</name>
    <name type="ordered locus">BSU29040</name>
</gene>
<evidence type="ECO:0000255" key="1"/>
<evidence type="ECO:0000305" key="2"/>
<proteinExistence type="inferred from homology"/>